<protein>
    <recommendedName>
        <fullName>Uncharacterized protein gp19</fullName>
        <shortName>E19 protein</shortName>
    </recommendedName>
    <alternativeName>
        <fullName>Gene product 19</fullName>
        <shortName>gp19</shortName>
    </alternativeName>
</protein>
<name>GP19_BPMU</name>
<feature type="chain" id="PRO_0000077814" description="Uncharacterized protein gp19">
    <location>
        <begin position="1"/>
        <end position="120"/>
    </location>
</feature>
<feature type="transmembrane region" description="Helical" evidence="1">
    <location>
        <begin position="9"/>
        <end position="29"/>
    </location>
</feature>
<feature type="transmembrane region" description="Helical" evidence="1">
    <location>
        <begin position="32"/>
        <end position="52"/>
    </location>
</feature>
<feature type="transmembrane region" description="Helical" evidence="1">
    <location>
        <begin position="68"/>
        <end position="88"/>
    </location>
</feature>
<feature type="transmembrane region" description="Helical" evidence="1">
    <location>
        <begin position="94"/>
        <end position="114"/>
    </location>
</feature>
<comment type="subcellular location">
    <subcellularLocation>
        <location evidence="3">Membrane</location>
        <topology evidence="3">Multi-pass membrane protein</topology>
    </subcellularLocation>
</comment>
<comment type="induction">
    <text evidence="2">Expressed in the intermediate phase of the viral replicative cycle.</text>
</comment>
<evidence type="ECO:0000255" key="1"/>
<evidence type="ECO:0000269" key="2">
    <source>
    </source>
</evidence>
<evidence type="ECO:0000305" key="3"/>
<dbReference type="EMBL" id="Y00419">
    <property type="protein sequence ID" value="CAA68479.1"/>
    <property type="molecule type" value="Genomic_DNA"/>
</dbReference>
<dbReference type="EMBL" id="M64097">
    <property type="protein sequence ID" value="AAA32411.1"/>
    <property type="molecule type" value="Genomic_DNA"/>
</dbReference>
<dbReference type="EMBL" id="AF083977">
    <property type="protein sequence ID" value="AAF01096.1"/>
    <property type="molecule type" value="Genomic_DNA"/>
</dbReference>
<dbReference type="RefSeq" id="NP_050623.1">
    <property type="nucleotide sequence ID" value="NC_000929.1"/>
</dbReference>
<dbReference type="GeneID" id="2636295"/>
<dbReference type="KEGG" id="vg:2636295"/>
<dbReference type="Proteomes" id="UP000002611">
    <property type="component" value="Genome"/>
</dbReference>
<dbReference type="Proteomes" id="UP000401936">
    <property type="component" value="Segment"/>
</dbReference>
<dbReference type="GO" id="GO:0016020">
    <property type="term" value="C:membrane"/>
    <property type="evidence" value="ECO:0007669"/>
    <property type="project" value="UniProtKB-SubCell"/>
</dbReference>
<keyword id="KW-0472">Membrane</keyword>
<keyword id="KW-1185">Reference proteome</keyword>
<keyword id="KW-0812">Transmembrane</keyword>
<keyword id="KW-1133">Transmembrane helix</keyword>
<organism>
    <name type="scientific">Escherichia phage Mu</name>
    <name type="common">Bacteriophage Mu</name>
    <dbReference type="NCBI Taxonomy" id="2681603"/>
    <lineage>
        <taxon>Viruses</taxon>
        <taxon>Duplodnaviria</taxon>
        <taxon>Heunggongvirae</taxon>
        <taxon>Uroviricota</taxon>
        <taxon>Caudoviricetes</taxon>
        <taxon>Muvirus</taxon>
        <taxon>Muvirus mu</taxon>
    </lineage>
</organism>
<gene>
    <name type="ordered locus">Mup19</name>
</gene>
<reference key="1">
    <citation type="submission" date="1987-09" db="EMBL/GenBank/DDBJ databases">
        <authorList>
            <person name="Stoddard S.F."/>
            <person name="Howe M.M."/>
        </authorList>
    </citation>
    <scope>NUCLEOTIDE SEQUENCE [GENOMIC DNA]</scope>
</reference>
<reference key="2">
    <citation type="book" date="1987" name="Phage Mu">
        <title>Sequence of the left end of Mu.</title>
        <editorList>
            <person name="Symonds N."/>
            <person name="Toussaint A."/>
            <person name="van de Putte P."/>
            <person name="Howe M.M."/>
        </editorList>
        <authorList>
            <person name="Priess H."/>
            <person name="Brauer B."/>
            <person name="Schmidt C."/>
            <person name="Kamp D."/>
        </authorList>
    </citation>
    <scope>NUCLEOTIDE SEQUENCE [GENOMIC DNA]</scope>
</reference>
<reference key="3">
    <citation type="journal article" date="2002" name="J. Mol. Biol.">
        <title>Bacteriophage Mu genome sequence: analysis and comparison with Mu-like prophages in Haemophilus, Neisseria and Deinococcus.</title>
        <authorList>
            <person name="Morgan G.J."/>
            <person name="Hatfull G.F."/>
            <person name="Casjens S."/>
            <person name="Hendrix R.W."/>
        </authorList>
    </citation>
    <scope>NUCLEOTIDE SEQUENCE [LARGE SCALE GENOMIC DNA]</scope>
</reference>
<reference key="4">
    <citation type="journal article" date="1989" name="J. Bacteriol.">
        <title>Localization and regulation of bacteriophage Mu promoters.</title>
        <authorList>
            <person name="Stoddard S.F."/>
            <person name="Howe M.M."/>
        </authorList>
    </citation>
    <scope>INDUCTION</scope>
</reference>
<sequence>MSERSARQWPDFLSVVLLALLLWISLFCGWRALMFCCASVFSVALCVAADCLDALIMSCRVPEHFARFVWPLTWLGSLSGLGLAVMATSQLKTGPEHVIWALAGLLTFWLSFRFRARLFG</sequence>
<proteinExistence type="evidence at transcript level"/>
<organismHost>
    <name type="scientific">Enterobacteriaceae</name>
    <dbReference type="NCBI Taxonomy" id="543"/>
</organismHost>
<accession>Q38646</accession>